<dbReference type="EMBL" id="CP000880">
    <property type="protein sequence ID" value="ABX23965.1"/>
    <property type="molecule type" value="Genomic_DNA"/>
</dbReference>
<dbReference type="SMR" id="A9MN35"/>
<dbReference type="STRING" id="41514.SARI_04176"/>
<dbReference type="KEGG" id="ses:SARI_04176"/>
<dbReference type="HOGENOM" id="CLU_155943_1_0_6"/>
<dbReference type="Proteomes" id="UP000002084">
    <property type="component" value="Chromosome"/>
</dbReference>
<dbReference type="GO" id="GO:0005737">
    <property type="term" value="C:cytoplasm"/>
    <property type="evidence" value="ECO:0007669"/>
    <property type="project" value="UniProtKB-SubCell"/>
</dbReference>
<dbReference type="GO" id="GO:0008033">
    <property type="term" value="P:tRNA processing"/>
    <property type="evidence" value="ECO:0007669"/>
    <property type="project" value="UniProtKB-UniRule"/>
</dbReference>
<dbReference type="Gene3D" id="3.40.1260.10">
    <property type="entry name" value="DsrEFH-like"/>
    <property type="match status" value="1"/>
</dbReference>
<dbReference type="HAMAP" id="MF_00389">
    <property type="entry name" value="Thiourid_synth_C"/>
    <property type="match status" value="1"/>
</dbReference>
<dbReference type="InterPro" id="IPR027396">
    <property type="entry name" value="DsrEFH-like"/>
</dbReference>
<dbReference type="InterPro" id="IPR003787">
    <property type="entry name" value="Sulphur_relay_DsrE/F-like"/>
</dbReference>
<dbReference type="InterPro" id="IPR037450">
    <property type="entry name" value="Sulphur_relay_TusC"/>
</dbReference>
<dbReference type="InterPro" id="IPR017462">
    <property type="entry name" value="Sulphur_relay_TusC/DsrF"/>
</dbReference>
<dbReference type="NCBIfam" id="NF001238">
    <property type="entry name" value="PRK00211.1"/>
    <property type="match status" value="1"/>
</dbReference>
<dbReference type="NCBIfam" id="TIGR03010">
    <property type="entry name" value="sulf_tusC_dsrF"/>
    <property type="match status" value="1"/>
</dbReference>
<dbReference type="PANTHER" id="PTHR38780">
    <property type="entry name" value="PROTEIN TUSC"/>
    <property type="match status" value="1"/>
</dbReference>
<dbReference type="PANTHER" id="PTHR38780:SF1">
    <property type="entry name" value="PROTEIN TUSC"/>
    <property type="match status" value="1"/>
</dbReference>
<dbReference type="Pfam" id="PF02635">
    <property type="entry name" value="DsrE"/>
    <property type="match status" value="1"/>
</dbReference>
<dbReference type="SUPFAM" id="SSF75169">
    <property type="entry name" value="DsrEFH-like"/>
    <property type="match status" value="1"/>
</dbReference>
<sequence>MKRIAFVFSTAPHGSASGREGLDALLATSALTEALGVFFISDGVFQLLPGQKPDAVLARDYIATFKLFDLYDIDQCWICAASLRERGLKNVNFVVDATPLEPVALRRELGNYDVILRF</sequence>
<reference key="1">
    <citation type="submission" date="2007-11" db="EMBL/GenBank/DDBJ databases">
        <authorList>
            <consortium name="The Salmonella enterica serovar Arizonae Genome Sequencing Project"/>
            <person name="McClelland M."/>
            <person name="Sanderson E.K."/>
            <person name="Porwollik S."/>
            <person name="Spieth J."/>
            <person name="Clifton W.S."/>
            <person name="Fulton R."/>
            <person name="Chunyan W."/>
            <person name="Wollam A."/>
            <person name="Shah N."/>
            <person name="Pepin K."/>
            <person name="Bhonagiri V."/>
            <person name="Nash W."/>
            <person name="Johnson M."/>
            <person name="Thiruvilangam P."/>
            <person name="Wilson R."/>
        </authorList>
    </citation>
    <scope>NUCLEOTIDE SEQUENCE [LARGE SCALE GENOMIC DNA]</scope>
    <source>
        <strain>ATCC BAA-731 / CDC346-86 / RSK2980</strain>
    </source>
</reference>
<organism>
    <name type="scientific">Salmonella arizonae (strain ATCC BAA-731 / CDC346-86 / RSK2980)</name>
    <dbReference type="NCBI Taxonomy" id="41514"/>
    <lineage>
        <taxon>Bacteria</taxon>
        <taxon>Pseudomonadati</taxon>
        <taxon>Pseudomonadota</taxon>
        <taxon>Gammaproteobacteria</taxon>
        <taxon>Enterobacterales</taxon>
        <taxon>Enterobacteriaceae</taxon>
        <taxon>Salmonella</taxon>
    </lineage>
</organism>
<name>TUSC_SALAR</name>
<comment type="function">
    <text evidence="1">Part of a sulfur-relay system required for 2-thiolation of 5-methylaminomethyl-2-thiouridine (mnm(5)s(2)U) at tRNA wobble positions.</text>
</comment>
<comment type="subunit">
    <text evidence="1">Heterohexamer, formed by a dimer of trimers. The hexameric TusBCD complex contains 2 copies each of TusB, TusC and TusD. The TusBCD complex interacts with TusE.</text>
</comment>
<comment type="subcellular location">
    <subcellularLocation>
        <location evidence="1">Cytoplasm</location>
    </subcellularLocation>
</comment>
<comment type="similarity">
    <text evidence="1">Belongs to the DsrF/TusC family.</text>
</comment>
<evidence type="ECO:0000255" key="1">
    <source>
        <dbReference type="HAMAP-Rule" id="MF_00389"/>
    </source>
</evidence>
<protein>
    <recommendedName>
        <fullName evidence="1">Protein TusC</fullName>
    </recommendedName>
    <alternativeName>
        <fullName evidence="1">tRNA 2-thiouridine synthesizing protein C</fullName>
    </alternativeName>
</protein>
<gene>
    <name evidence="1" type="primary">tusC</name>
    <name type="ordered locus">SARI_04176</name>
</gene>
<keyword id="KW-0963">Cytoplasm</keyword>
<keyword id="KW-1185">Reference proteome</keyword>
<keyword id="KW-0819">tRNA processing</keyword>
<proteinExistence type="inferred from homology"/>
<accession>A9MN35</accession>
<feature type="chain" id="PRO_1000080232" description="Protein TusC">
    <location>
        <begin position="1"/>
        <end position="118"/>
    </location>
</feature>